<proteinExistence type="inferred from homology"/>
<organism>
    <name type="scientific">Aromatoleum aromaticum (strain DSM 19018 / LMG 30748 / EbN1)</name>
    <name type="common">Azoarcus sp. (strain EbN1)</name>
    <dbReference type="NCBI Taxonomy" id="76114"/>
    <lineage>
        <taxon>Bacteria</taxon>
        <taxon>Pseudomonadati</taxon>
        <taxon>Pseudomonadota</taxon>
        <taxon>Betaproteobacteria</taxon>
        <taxon>Rhodocyclales</taxon>
        <taxon>Rhodocyclaceae</taxon>
        <taxon>Aromatoleum</taxon>
    </lineage>
</organism>
<reference key="1">
    <citation type="journal article" date="2005" name="Arch. Microbiol.">
        <title>The genome sequence of an anaerobic aromatic-degrading denitrifying bacterium, strain EbN1.</title>
        <authorList>
            <person name="Rabus R."/>
            <person name="Kube M."/>
            <person name="Heider J."/>
            <person name="Beck A."/>
            <person name="Heitmann K."/>
            <person name="Widdel F."/>
            <person name="Reinhardt R."/>
        </authorList>
    </citation>
    <scope>NUCLEOTIDE SEQUENCE [LARGE SCALE GENOMIC DNA]</scope>
    <source>
        <strain>DSM 19018 / LMG 30748 / EbN1</strain>
    </source>
</reference>
<protein>
    <recommendedName>
        <fullName evidence="1">Uridylate kinase</fullName>
        <shortName evidence="1">UK</shortName>
        <ecNumber evidence="1">2.7.4.22</ecNumber>
    </recommendedName>
    <alternativeName>
        <fullName evidence="1">Uridine monophosphate kinase</fullName>
        <shortName evidence="1">UMP kinase</shortName>
        <shortName evidence="1">UMPK</shortName>
    </alternativeName>
</protein>
<gene>
    <name evidence="1" type="primary">pyrH</name>
    <name type="ordered locus">AZOSEA34160</name>
    <name type="ORF">ebA5988</name>
</gene>
<accession>Q5NZH3</accession>
<evidence type="ECO:0000255" key="1">
    <source>
        <dbReference type="HAMAP-Rule" id="MF_01220"/>
    </source>
</evidence>
<keyword id="KW-0067">ATP-binding</keyword>
<keyword id="KW-0963">Cytoplasm</keyword>
<keyword id="KW-0418">Kinase</keyword>
<keyword id="KW-0547">Nucleotide-binding</keyword>
<keyword id="KW-0665">Pyrimidine biosynthesis</keyword>
<keyword id="KW-1185">Reference proteome</keyword>
<keyword id="KW-0808">Transferase</keyword>
<name>PYRH_AROAE</name>
<dbReference type="EC" id="2.7.4.22" evidence="1"/>
<dbReference type="EMBL" id="CR555306">
    <property type="protein sequence ID" value="CAI09541.1"/>
    <property type="molecule type" value="Genomic_DNA"/>
</dbReference>
<dbReference type="RefSeq" id="WP_011239201.1">
    <property type="nucleotide sequence ID" value="NC_006513.1"/>
</dbReference>
<dbReference type="SMR" id="Q5NZH3"/>
<dbReference type="STRING" id="76114.ebA5988"/>
<dbReference type="KEGG" id="eba:ebA5988"/>
<dbReference type="eggNOG" id="COG0528">
    <property type="taxonomic scope" value="Bacteria"/>
</dbReference>
<dbReference type="HOGENOM" id="CLU_033861_0_0_4"/>
<dbReference type="OrthoDB" id="9807458at2"/>
<dbReference type="UniPathway" id="UPA00159">
    <property type="reaction ID" value="UER00275"/>
</dbReference>
<dbReference type="Proteomes" id="UP000006552">
    <property type="component" value="Chromosome"/>
</dbReference>
<dbReference type="GO" id="GO:0005829">
    <property type="term" value="C:cytosol"/>
    <property type="evidence" value="ECO:0007669"/>
    <property type="project" value="TreeGrafter"/>
</dbReference>
<dbReference type="GO" id="GO:0005524">
    <property type="term" value="F:ATP binding"/>
    <property type="evidence" value="ECO:0007669"/>
    <property type="project" value="UniProtKB-KW"/>
</dbReference>
<dbReference type="GO" id="GO:0033862">
    <property type="term" value="F:UMP kinase activity"/>
    <property type="evidence" value="ECO:0007669"/>
    <property type="project" value="UniProtKB-EC"/>
</dbReference>
<dbReference type="GO" id="GO:0044210">
    <property type="term" value="P:'de novo' CTP biosynthetic process"/>
    <property type="evidence" value="ECO:0007669"/>
    <property type="project" value="UniProtKB-UniRule"/>
</dbReference>
<dbReference type="GO" id="GO:0006225">
    <property type="term" value="P:UDP biosynthetic process"/>
    <property type="evidence" value="ECO:0007669"/>
    <property type="project" value="TreeGrafter"/>
</dbReference>
<dbReference type="CDD" id="cd04254">
    <property type="entry name" value="AAK_UMPK-PyrH-Ec"/>
    <property type="match status" value="1"/>
</dbReference>
<dbReference type="FunFam" id="3.40.1160.10:FF:000001">
    <property type="entry name" value="Uridylate kinase"/>
    <property type="match status" value="1"/>
</dbReference>
<dbReference type="Gene3D" id="3.40.1160.10">
    <property type="entry name" value="Acetylglutamate kinase-like"/>
    <property type="match status" value="1"/>
</dbReference>
<dbReference type="HAMAP" id="MF_01220_B">
    <property type="entry name" value="PyrH_B"/>
    <property type="match status" value="1"/>
</dbReference>
<dbReference type="InterPro" id="IPR036393">
    <property type="entry name" value="AceGlu_kinase-like_sf"/>
</dbReference>
<dbReference type="InterPro" id="IPR001048">
    <property type="entry name" value="Asp/Glu/Uridylate_kinase"/>
</dbReference>
<dbReference type="InterPro" id="IPR011817">
    <property type="entry name" value="Uridylate_kinase"/>
</dbReference>
<dbReference type="InterPro" id="IPR015963">
    <property type="entry name" value="Uridylate_kinase_bac"/>
</dbReference>
<dbReference type="NCBIfam" id="TIGR02075">
    <property type="entry name" value="pyrH_bact"/>
    <property type="match status" value="1"/>
</dbReference>
<dbReference type="PANTHER" id="PTHR42833">
    <property type="entry name" value="URIDYLATE KINASE"/>
    <property type="match status" value="1"/>
</dbReference>
<dbReference type="PANTHER" id="PTHR42833:SF4">
    <property type="entry name" value="URIDYLATE KINASE PUMPKIN, CHLOROPLASTIC"/>
    <property type="match status" value="1"/>
</dbReference>
<dbReference type="Pfam" id="PF00696">
    <property type="entry name" value="AA_kinase"/>
    <property type="match status" value="1"/>
</dbReference>
<dbReference type="PIRSF" id="PIRSF005650">
    <property type="entry name" value="Uridylate_kin"/>
    <property type="match status" value="1"/>
</dbReference>
<dbReference type="SUPFAM" id="SSF53633">
    <property type="entry name" value="Carbamate kinase-like"/>
    <property type="match status" value="1"/>
</dbReference>
<comment type="function">
    <text evidence="1">Catalyzes the reversible phosphorylation of UMP to UDP.</text>
</comment>
<comment type="catalytic activity">
    <reaction evidence="1">
        <text>UMP + ATP = UDP + ADP</text>
        <dbReference type="Rhea" id="RHEA:24400"/>
        <dbReference type="ChEBI" id="CHEBI:30616"/>
        <dbReference type="ChEBI" id="CHEBI:57865"/>
        <dbReference type="ChEBI" id="CHEBI:58223"/>
        <dbReference type="ChEBI" id="CHEBI:456216"/>
        <dbReference type="EC" id="2.7.4.22"/>
    </reaction>
</comment>
<comment type="activity regulation">
    <text evidence="1">Inhibited by UTP.</text>
</comment>
<comment type="pathway">
    <text evidence="1">Pyrimidine metabolism; CTP biosynthesis via de novo pathway; UDP from UMP (UMPK route): step 1/1.</text>
</comment>
<comment type="subunit">
    <text evidence="1">Homohexamer.</text>
</comment>
<comment type="subcellular location">
    <subcellularLocation>
        <location evidence="1">Cytoplasm</location>
    </subcellularLocation>
</comment>
<comment type="similarity">
    <text evidence="1">Belongs to the UMP kinase family.</text>
</comment>
<feature type="chain" id="PRO_0000323789" description="Uridylate kinase">
    <location>
        <begin position="1"/>
        <end position="238"/>
    </location>
</feature>
<feature type="binding site" evidence="1">
    <location>
        <begin position="12"/>
        <end position="15"/>
    </location>
    <ligand>
        <name>ATP</name>
        <dbReference type="ChEBI" id="CHEBI:30616"/>
    </ligand>
</feature>
<feature type="binding site" evidence="1">
    <location>
        <position position="54"/>
    </location>
    <ligand>
        <name>UMP</name>
        <dbReference type="ChEBI" id="CHEBI:57865"/>
    </ligand>
</feature>
<feature type="binding site" evidence="1">
    <location>
        <position position="55"/>
    </location>
    <ligand>
        <name>ATP</name>
        <dbReference type="ChEBI" id="CHEBI:30616"/>
    </ligand>
</feature>
<feature type="binding site" evidence="1">
    <location>
        <position position="59"/>
    </location>
    <ligand>
        <name>ATP</name>
        <dbReference type="ChEBI" id="CHEBI:30616"/>
    </ligand>
</feature>
<feature type="binding site" evidence="1">
    <location>
        <position position="74"/>
    </location>
    <ligand>
        <name>UMP</name>
        <dbReference type="ChEBI" id="CHEBI:57865"/>
    </ligand>
</feature>
<feature type="binding site" evidence="1">
    <location>
        <begin position="135"/>
        <end position="142"/>
    </location>
    <ligand>
        <name>UMP</name>
        <dbReference type="ChEBI" id="CHEBI:57865"/>
    </ligand>
</feature>
<feature type="binding site" evidence="1">
    <location>
        <position position="162"/>
    </location>
    <ligand>
        <name>ATP</name>
        <dbReference type="ChEBI" id="CHEBI:30616"/>
    </ligand>
</feature>
<feature type="binding site" evidence="1">
    <location>
        <position position="168"/>
    </location>
    <ligand>
        <name>ATP</name>
        <dbReference type="ChEBI" id="CHEBI:30616"/>
    </ligand>
</feature>
<feature type="binding site" evidence="1">
    <location>
        <position position="171"/>
    </location>
    <ligand>
        <name>ATP</name>
        <dbReference type="ChEBI" id="CHEBI:30616"/>
    </ligand>
</feature>
<sequence>MSVAAYKRIMLKLSGEALMGDDSYGINEDVVSRIVAEIAEVNRLGVQVGVVIGGGNIFRGMKGAASGMDRATADYMGMLATVMNAMALADAFRRAQVEARVQSALRIDQVVEPYIRGRAIRHMEEGRVVIFAAGTGNPFFTTDTAAALRGSEMAAQIVLKATKVDGVYTADPKKDPQAQRYHRISFDEAIGRNLAVLDATAFALCRDQKLPINVFSIFKPGALKRVVLGEDEGTLVHS</sequence>